<organism>
    <name type="scientific">Bacillus cereus (strain 03BB102)</name>
    <dbReference type="NCBI Taxonomy" id="572264"/>
    <lineage>
        <taxon>Bacteria</taxon>
        <taxon>Bacillati</taxon>
        <taxon>Bacillota</taxon>
        <taxon>Bacilli</taxon>
        <taxon>Bacillales</taxon>
        <taxon>Bacillaceae</taxon>
        <taxon>Bacillus</taxon>
        <taxon>Bacillus cereus group</taxon>
    </lineage>
</organism>
<accession>C1EV89</accession>
<evidence type="ECO:0000255" key="1">
    <source>
        <dbReference type="HAMAP-Rule" id="MF_00121"/>
    </source>
</evidence>
<comment type="function">
    <text evidence="1">Allows the formation of correctly charged Asn-tRNA(Asn) or Gln-tRNA(Gln) through the transamidation of misacylated Asp-tRNA(Asn) or Glu-tRNA(Gln) in organisms which lack either or both of asparaginyl-tRNA or glutaminyl-tRNA synthetases. The reaction takes place in the presence of glutamine and ATP through an activated phospho-Asp-tRNA(Asn) or phospho-Glu-tRNA(Gln).</text>
</comment>
<comment type="catalytic activity">
    <reaction evidence="1">
        <text>L-glutamyl-tRNA(Gln) + L-glutamine + ATP + H2O = L-glutaminyl-tRNA(Gln) + L-glutamate + ADP + phosphate + H(+)</text>
        <dbReference type="Rhea" id="RHEA:17521"/>
        <dbReference type="Rhea" id="RHEA-COMP:9681"/>
        <dbReference type="Rhea" id="RHEA-COMP:9684"/>
        <dbReference type="ChEBI" id="CHEBI:15377"/>
        <dbReference type="ChEBI" id="CHEBI:15378"/>
        <dbReference type="ChEBI" id="CHEBI:29985"/>
        <dbReference type="ChEBI" id="CHEBI:30616"/>
        <dbReference type="ChEBI" id="CHEBI:43474"/>
        <dbReference type="ChEBI" id="CHEBI:58359"/>
        <dbReference type="ChEBI" id="CHEBI:78520"/>
        <dbReference type="ChEBI" id="CHEBI:78521"/>
        <dbReference type="ChEBI" id="CHEBI:456216"/>
    </reaction>
</comment>
<comment type="catalytic activity">
    <reaction evidence="1">
        <text>L-aspartyl-tRNA(Asn) + L-glutamine + ATP + H2O = L-asparaginyl-tRNA(Asn) + L-glutamate + ADP + phosphate + 2 H(+)</text>
        <dbReference type="Rhea" id="RHEA:14513"/>
        <dbReference type="Rhea" id="RHEA-COMP:9674"/>
        <dbReference type="Rhea" id="RHEA-COMP:9677"/>
        <dbReference type="ChEBI" id="CHEBI:15377"/>
        <dbReference type="ChEBI" id="CHEBI:15378"/>
        <dbReference type="ChEBI" id="CHEBI:29985"/>
        <dbReference type="ChEBI" id="CHEBI:30616"/>
        <dbReference type="ChEBI" id="CHEBI:43474"/>
        <dbReference type="ChEBI" id="CHEBI:58359"/>
        <dbReference type="ChEBI" id="CHEBI:78515"/>
        <dbReference type="ChEBI" id="CHEBI:78516"/>
        <dbReference type="ChEBI" id="CHEBI:456216"/>
    </reaction>
</comment>
<comment type="subunit">
    <text evidence="1">Heterotrimer of A, B and C subunits.</text>
</comment>
<comment type="similarity">
    <text evidence="1">Belongs to the GatB/GatE family. GatB subfamily.</text>
</comment>
<proteinExistence type="inferred from homology"/>
<keyword id="KW-0067">ATP-binding</keyword>
<keyword id="KW-0436">Ligase</keyword>
<keyword id="KW-0547">Nucleotide-binding</keyword>
<keyword id="KW-0648">Protein biosynthesis</keyword>
<name>GATB_BACC3</name>
<reference key="1">
    <citation type="submission" date="2009-02" db="EMBL/GenBank/DDBJ databases">
        <title>Genome sequence of Bacillus cereus 03BB102.</title>
        <authorList>
            <person name="Dodson R.J."/>
            <person name="Jackson P."/>
            <person name="Munk A.C."/>
            <person name="Brettin T."/>
            <person name="Bruce D."/>
            <person name="Detter C."/>
            <person name="Tapia R."/>
            <person name="Han C."/>
            <person name="Sutton G."/>
            <person name="Sims D."/>
        </authorList>
    </citation>
    <scope>NUCLEOTIDE SEQUENCE [LARGE SCALE GENOMIC DNA]</scope>
    <source>
        <strain>03BB102</strain>
    </source>
</reference>
<sequence length="475" mass="53222">MNLETIIGLEVHVELKTNSKIFSASPTEFGAEPNTQTSVIDLGYPGVLPTLNKEAVNFAMKAAMALNCEIATETKFDRKNYFYPDNPKAYQISQFDKPIGENGWIEIEVDGKKKRIGITRLHLEEDAGKSTHTADGSLVDYNRQGMPLIEIVSEPDMRTPEEAYAYLEKLKSIIQYTGVSDCKMEEGSLRCDANISLRPVGQEKFGTKAELKNLNSFTYVQKGLEHEQVRQEKELLSGGIIQQETRRYDEATKKTILMRVKEGSDDYRYFPEPDLVELYIDDAWKEEVRASIPELPDARKARYVAEIGLPAYDAHVLTLTKEMSDFFEAAIADGADAKLTSNWLMGEVLAYLNKQQKELKDVALTPAGLSKMVQLIEKGTISSKIAKKVFNELIEKGGDPEEIVKAKGLVQISDEGTLRKVVTEILDNNEQSIEDFKNGKDRAIGFLVGQIMKATKGQANPPLVNKILLEEINKR</sequence>
<feature type="chain" id="PRO_1000122507" description="Aspartyl/glutamyl-tRNA(Asn/Gln) amidotransferase subunit B">
    <location>
        <begin position="1"/>
        <end position="475"/>
    </location>
</feature>
<dbReference type="EC" id="6.3.5.-" evidence="1"/>
<dbReference type="EMBL" id="CP001407">
    <property type="protein sequence ID" value="ACO30994.1"/>
    <property type="molecule type" value="Genomic_DNA"/>
</dbReference>
<dbReference type="RefSeq" id="WP_001047678.1">
    <property type="nucleotide sequence ID" value="NZ_CP009318.1"/>
</dbReference>
<dbReference type="SMR" id="C1EV89"/>
<dbReference type="GeneID" id="45020378"/>
<dbReference type="KEGG" id="bcx:BCA_0395"/>
<dbReference type="PATRIC" id="fig|572264.18.peg.384"/>
<dbReference type="Proteomes" id="UP000002210">
    <property type="component" value="Chromosome"/>
</dbReference>
<dbReference type="GO" id="GO:0050566">
    <property type="term" value="F:asparaginyl-tRNA synthase (glutamine-hydrolyzing) activity"/>
    <property type="evidence" value="ECO:0007669"/>
    <property type="project" value="RHEA"/>
</dbReference>
<dbReference type="GO" id="GO:0005524">
    <property type="term" value="F:ATP binding"/>
    <property type="evidence" value="ECO:0007669"/>
    <property type="project" value="UniProtKB-KW"/>
</dbReference>
<dbReference type="GO" id="GO:0050567">
    <property type="term" value="F:glutaminyl-tRNA synthase (glutamine-hydrolyzing) activity"/>
    <property type="evidence" value="ECO:0007669"/>
    <property type="project" value="UniProtKB-UniRule"/>
</dbReference>
<dbReference type="GO" id="GO:0070681">
    <property type="term" value="P:glutaminyl-tRNAGln biosynthesis via transamidation"/>
    <property type="evidence" value="ECO:0007669"/>
    <property type="project" value="TreeGrafter"/>
</dbReference>
<dbReference type="GO" id="GO:0006412">
    <property type="term" value="P:translation"/>
    <property type="evidence" value="ECO:0007669"/>
    <property type="project" value="UniProtKB-UniRule"/>
</dbReference>
<dbReference type="FunFam" id="1.10.10.410:FF:000001">
    <property type="entry name" value="Aspartyl/glutamyl-tRNA(Asn/Gln) amidotransferase subunit B"/>
    <property type="match status" value="1"/>
</dbReference>
<dbReference type="FunFam" id="1.10.150.380:FF:000001">
    <property type="entry name" value="Aspartyl/glutamyl-tRNA(Asn/Gln) amidotransferase subunit B"/>
    <property type="match status" value="1"/>
</dbReference>
<dbReference type="Gene3D" id="1.10.10.410">
    <property type="match status" value="1"/>
</dbReference>
<dbReference type="Gene3D" id="1.10.150.380">
    <property type="entry name" value="GatB domain, N-terminal subdomain"/>
    <property type="match status" value="1"/>
</dbReference>
<dbReference type="HAMAP" id="MF_00121">
    <property type="entry name" value="GatB"/>
    <property type="match status" value="1"/>
</dbReference>
<dbReference type="InterPro" id="IPR017959">
    <property type="entry name" value="Asn/Gln-tRNA_amidoTrfase_suB/E"/>
</dbReference>
<dbReference type="InterPro" id="IPR006075">
    <property type="entry name" value="Asn/Gln-tRNA_Trfase_suB/E_cat"/>
</dbReference>
<dbReference type="InterPro" id="IPR018027">
    <property type="entry name" value="Asn/Gln_amidotransferase"/>
</dbReference>
<dbReference type="InterPro" id="IPR003789">
    <property type="entry name" value="Asn/Gln_tRNA_amidoTrase-B-like"/>
</dbReference>
<dbReference type="InterPro" id="IPR004413">
    <property type="entry name" value="GatB"/>
</dbReference>
<dbReference type="InterPro" id="IPR042114">
    <property type="entry name" value="GatB_C_1"/>
</dbReference>
<dbReference type="InterPro" id="IPR023168">
    <property type="entry name" value="GatB_Yqey_C_2"/>
</dbReference>
<dbReference type="InterPro" id="IPR017958">
    <property type="entry name" value="Gln-tRNA_amidoTrfase_suB_CS"/>
</dbReference>
<dbReference type="InterPro" id="IPR014746">
    <property type="entry name" value="Gln_synth/guanido_kin_cat_dom"/>
</dbReference>
<dbReference type="NCBIfam" id="TIGR00133">
    <property type="entry name" value="gatB"/>
    <property type="match status" value="1"/>
</dbReference>
<dbReference type="NCBIfam" id="NF004011">
    <property type="entry name" value="PRK05477.1-1"/>
    <property type="match status" value="1"/>
</dbReference>
<dbReference type="NCBIfam" id="NF004012">
    <property type="entry name" value="PRK05477.1-2"/>
    <property type="match status" value="1"/>
</dbReference>
<dbReference type="NCBIfam" id="NF004014">
    <property type="entry name" value="PRK05477.1-4"/>
    <property type="match status" value="1"/>
</dbReference>
<dbReference type="PANTHER" id="PTHR11659">
    <property type="entry name" value="GLUTAMYL-TRNA GLN AMIDOTRANSFERASE SUBUNIT B MITOCHONDRIAL AND PROKARYOTIC PET112-RELATED"/>
    <property type="match status" value="1"/>
</dbReference>
<dbReference type="PANTHER" id="PTHR11659:SF0">
    <property type="entry name" value="GLUTAMYL-TRNA(GLN) AMIDOTRANSFERASE SUBUNIT B, MITOCHONDRIAL"/>
    <property type="match status" value="1"/>
</dbReference>
<dbReference type="Pfam" id="PF02934">
    <property type="entry name" value="GatB_N"/>
    <property type="match status" value="1"/>
</dbReference>
<dbReference type="Pfam" id="PF02637">
    <property type="entry name" value="GatB_Yqey"/>
    <property type="match status" value="1"/>
</dbReference>
<dbReference type="SMART" id="SM00845">
    <property type="entry name" value="GatB_Yqey"/>
    <property type="match status" value="1"/>
</dbReference>
<dbReference type="SUPFAM" id="SSF89095">
    <property type="entry name" value="GatB/YqeY motif"/>
    <property type="match status" value="1"/>
</dbReference>
<dbReference type="SUPFAM" id="SSF55931">
    <property type="entry name" value="Glutamine synthetase/guanido kinase"/>
    <property type="match status" value="1"/>
</dbReference>
<dbReference type="PROSITE" id="PS01234">
    <property type="entry name" value="GATB"/>
    <property type="match status" value="1"/>
</dbReference>
<gene>
    <name evidence="1" type="primary">gatB</name>
    <name type="ordered locus">BCA_0395</name>
</gene>
<protein>
    <recommendedName>
        <fullName evidence="1">Aspartyl/glutamyl-tRNA(Asn/Gln) amidotransferase subunit B</fullName>
        <shortName evidence="1">Asp/Glu-ADT subunit B</shortName>
        <ecNumber evidence="1">6.3.5.-</ecNumber>
    </recommendedName>
</protein>